<comment type="function">
    <text evidence="1">Converts heme B (protoheme IX) to heme O by substitution of the vinyl group on carbon 2 of heme B porphyrin ring with a hydroxyethyl farnesyl side group.</text>
</comment>
<comment type="catalytic activity">
    <reaction evidence="1">
        <text>heme b + (2E,6E)-farnesyl diphosphate + H2O = Fe(II)-heme o + diphosphate</text>
        <dbReference type="Rhea" id="RHEA:28070"/>
        <dbReference type="ChEBI" id="CHEBI:15377"/>
        <dbReference type="ChEBI" id="CHEBI:33019"/>
        <dbReference type="ChEBI" id="CHEBI:60344"/>
        <dbReference type="ChEBI" id="CHEBI:60530"/>
        <dbReference type="ChEBI" id="CHEBI:175763"/>
        <dbReference type="EC" id="2.5.1.141"/>
    </reaction>
</comment>
<comment type="pathway">
    <text evidence="1">Porphyrin-containing compound metabolism; heme O biosynthesis; heme O from protoheme: step 1/1.</text>
</comment>
<comment type="subcellular location">
    <subcellularLocation>
        <location evidence="1">Cell membrane</location>
        <topology evidence="1">Multi-pass membrane protein</topology>
    </subcellularLocation>
</comment>
<comment type="miscellaneous">
    <text evidence="1">Carbon 2 of the heme B porphyrin ring is defined according to the Fischer nomenclature.</text>
</comment>
<comment type="similarity">
    <text evidence="1">Belongs to the UbiA prenyltransferase family. Protoheme IX farnesyltransferase subfamily.</text>
</comment>
<proteinExistence type="inferred from homology"/>
<evidence type="ECO:0000255" key="1">
    <source>
        <dbReference type="HAMAP-Rule" id="MF_00154"/>
    </source>
</evidence>
<accession>Q1LTJ4</accession>
<keyword id="KW-1003">Cell membrane</keyword>
<keyword id="KW-0350">Heme biosynthesis</keyword>
<keyword id="KW-0472">Membrane</keyword>
<keyword id="KW-1185">Reference proteome</keyword>
<keyword id="KW-0808">Transferase</keyword>
<keyword id="KW-0812">Transmembrane</keyword>
<keyword id="KW-1133">Transmembrane helix</keyword>
<sequence length="288" mass="32498">MIRLYLQATKPGIVLSNLMSFIGGFLLASKGRINYLIFLVTLLGVLFIVTAGCVLNNIIDRDIDRKMERTKNRPLAIGSISILTCLIYALICSIIGIYLLYNYTNKLTMLLAIIGLIVYVGIYTKCMKRQSIYSTIIGSFSGAIPPVIGYCAVSNQFDTGALLLLLIFCLWQMPHSYAIAILRLQDYQAASIPILPIKKGIRITKNHIVIYIVAFIVTTILLNISGYTTSYQYLIVTNFINFWWLYLALQGYKEDNNDILWSKKMFIFSIIAITSLSLMMSLDSIFSR</sequence>
<protein>
    <recommendedName>
        <fullName evidence="1">Protoheme IX farnesyltransferase</fullName>
        <ecNumber evidence="1">2.5.1.141</ecNumber>
    </recommendedName>
    <alternativeName>
        <fullName evidence="1">Heme B farnesyltransferase</fullName>
    </alternativeName>
    <alternativeName>
        <fullName evidence="1">Heme O synthase</fullName>
    </alternativeName>
</protein>
<feature type="chain" id="PRO_0000326883" description="Protoheme IX farnesyltransferase">
    <location>
        <begin position="1"/>
        <end position="288"/>
    </location>
</feature>
<feature type="transmembrane region" description="Helical" evidence="1">
    <location>
        <begin position="8"/>
        <end position="28"/>
    </location>
</feature>
<feature type="transmembrane region" description="Helical" evidence="1">
    <location>
        <begin position="35"/>
        <end position="55"/>
    </location>
</feature>
<feature type="transmembrane region" description="Helical" evidence="1">
    <location>
        <begin position="80"/>
        <end position="100"/>
    </location>
</feature>
<feature type="transmembrane region" description="Helical" evidence="1">
    <location>
        <begin position="107"/>
        <end position="127"/>
    </location>
</feature>
<feature type="transmembrane region" description="Helical" evidence="1">
    <location>
        <begin position="132"/>
        <end position="152"/>
    </location>
</feature>
<feature type="transmembrane region" description="Helical" evidence="1">
    <location>
        <begin position="162"/>
        <end position="182"/>
    </location>
</feature>
<feature type="transmembrane region" description="Helical" evidence="1">
    <location>
        <begin position="208"/>
        <end position="228"/>
    </location>
</feature>
<feature type="transmembrane region" description="Helical" evidence="1">
    <location>
        <begin position="229"/>
        <end position="249"/>
    </location>
</feature>
<feature type="transmembrane region" description="Helical" evidence="1">
    <location>
        <begin position="266"/>
        <end position="286"/>
    </location>
</feature>
<name>CYOE_BAUCH</name>
<reference key="1">
    <citation type="journal article" date="2006" name="PLoS Biol.">
        <title>Metabolic complementarity and genomics of the dual bacterial symbiosis of sharpshooters.</title>
        <authorList>
            <person name="Wu D."/>
            <person name="Daugherty S.C."/>
            <person name="Van Aken S.E."/>
            <person name="Pai G.H."/>
            <person name="Watkins K.L."/>
            <person name="Khouri H."/>
            <person name="Tallon L.J."/>
            <person name="Zaborsky J.M."/>
            <person name="Dunbar H.E."/>
            <person name="Tran P.L."/>
            <person name="Moran N.A."/>
            <person name="Eisen J.A."/>
        </authorList>
    </citation>
    <scope>NUCLEOTIDE SEQUENCE [LARGE SCALE GENOMIC DNA]</scope>
</reference>
<organism>
    <name type="scientific">Baumannia cicadellinicola subsp. Homalodisca coagulata</name>
    <dbReference type="NCBI Taxonomy" id="374463"/>
    <lineage>
        <taxon>Bacteria</taxon>
        <taxon>Pseudomonadati</taxon>
        <taxon>Pseudomonadota</taxon>
        <taxon>Gammaproteobacteria</taxon>
        <taxon>Candidatus Palibaumannia</taxon>
    </lineage>
</organism>
<gene>
    <name evidence="1" type="primary">cyoE</name>
    <name type="ordered locus">BCI_0270</name>
</gene>
<dbReference type="EC" id="2.5.1.141" evidence="1"/>
<dbReference type="EMBL" id="CP000238">
    <property type="protein sequence ID" value="ABF13813.1"/>
    <property type="molecule type" value="Genomic_DNA"/>
</dbReference>
<dbReference type="RefSeq" id="WP_011520453.1">
    <property type="nucleotide sequence ID" value="NC_007984.1"/>
</dbReference>
<dbReference type="SMR" id="Q1LTJ4"/>
<dbReference type="STRING" id="374463.BCI_0270"/>
<dbReference type="KEGG" id="bci:BCI_0270"/>
<dbReference type="HOGENOM" id="CLU_029631_0_0_6"/>
<dbReference type="OrthoDB" id="9814417at2"/>
<dbReference type="UniPathway" id="UPA00834">
    <property type="reaction ID" value="UER00712"/>
</dbReference>
<dbReference type="Proteomes" id="UP000002427">
    <property type="component" value="Chromosome"/>
</dbReference>
<dbReference type="GO" id="GO:0005886">
    <property type="term" value="C:plasma membrane"/>
    <property type="evidence" value="ECO:0007669"/>
    <property type="project" value="UniProtKB-SubCell"/>
</dbReference>
<dbReference type="GO" id="GO:0008495">
    <property type="term" value="F:protoheme IX farnesyltransferase activity"/>
    <property type="evidence" value="ECO:0007669"/>
    <property type="project" value="UniProtKB-UniRule"/>
</dbReference>
<dbReference type="GO" id="GO:0048034">
    <property type="term" value="P:heme O biosynthetic process"/>
    <property type="evidence" value="ECO:0007669"/>
    <property type="project" value="UniProtKB-UniRule"/>
</dbReference>
<dbReference type="CDD" id="cd13957">
    <property type="entry name" value="PT_UbiA_Cox10"/>
    <property type="match status" value="1"/>
</dbReference>
<dbReference type="FunFam" id="1.10.357.140:FF:000001">
    <property type="entry name" value="Protoheme IX farnesyltransferase"/>
    <property type="match status" value="1"/>
</dbReference>
<dbReference type="Gene3D" id="1.10.357.140">
    <property type="entry name" value="UbiA prenyltransferase"/>
    <property type="match status" value="1"/>
</dbReference>
<dbReference type="HAMAP" id="MF_00154">
    <property type="entry name" value="CyoE_CtaB"/>
    <property type="match status" value="1"/>
</dbReference>
<dbReference type="InterPro" id="IPR006369">
    <property type="entry name" value="Protohaem_IX_farnesylTrfase"/>
</dbReference>
<dbReference type="InterPro" id="IPR000537">
    <property type="entry name" value="UbiA_prenyltransferase"/>
</dbReference>
<dbReference type="InterPro" id="IPR030470">
    <property type="entry name" value="UbiA_prenylTrfase_CS"/>
</dbReference>
<dbReference type="InterPro" id="IPR044878">
    <property type="entry name" value="UbiA_sf"/>
</dbReference>
<dbReference type="NCBIfam" id="TIGR01473">
    <property type="entry name" value="cyoE_ctaB"/>
    <property type="match status" value="1"/>
</dbReference>
<dbReference type="NCBIfam" id="NF003348">
    <property type="entry name" value="PRK04375.1-1"/>
    <property type="match status" value="1"/>
</dbReference>
<dbReference type="PANTHER" id="PTHR43448">
    <property type="entry name" value="PROTOHEME IX FARNESYLTRANSFERASE, MITOCHONDRIAL"/>
    <property type="match status" value="1"/>
</dbReference>
<dbReference type="PANTHER" id="PTHR43448:SF2">
    <property type="entry name" value="PROTOHEME IX FARNESYLTRANSFERASE, MITOCHONDRIAL"/>
    <property type="match status" value="1"/>
</dbReference>
<dbReference type="Pfam" id="PF01040">
    <property type="entry name" value="UbiA"/>
    <property type="match status" value="1"/>
</dbReference>
<dbReference type="PROSITE" id="PS00943">
    <property type="entry name" value="UBIA"/>
    <property type="match status" value="1"/>
</dbReference>